<sequence length="498" mass="51295">MAQVINTNSLSLITQNNINKNQSALSSSIERLSSGLRINSAKDDAAGQAIANRFTSNIKGLTQAARNANDGISVAQTTEGALSEINNNLQRVRELTVQATTGTNSESDLSSIQDEIKSRLDEIDRVSGQTQFNGVNVLAKNGSMKIQVGANDNQTITIDLKQIDAKTLGLDGFSVKNNDTVTTSAPVTAFGATTTNNIKLTGITLSTEAATDTGGTNPASIEGVYTDNGNDYYAKITGGDNDGKYYAVTVANDGTVTMATGATANATVTDANTTKATTITSGGTPVQIDNTAGSATANLGAVSLVKLQDSKGNDTDTYALKDTNGNLYAADVNETTGAVSVKTITYTDSSGAASSPTAVKLGGDDGKTEVVDIDGKTYDSADLNGGNLQTGLTAGGEALTAVANGKTTDPLKALDDAIASVDKFRSSLGAVQNRLDSAVTNLNNTTTNLSEAQSRIQDADYATEVSNMSKAQIIQQAGNSVLAKANQVPQQVLSLLQG</sequence>
<dbReference type="EMBL" id="M14358">
    <property type="protein sequence ID" value="AAA23950.1"/>
    <property type="molecule type" value="Genomic_DNA"/>
</dbReference>
<dbReference type="EMBL" id="X17440">
    <property type="protein sequence ID" value="CAA35488.1"/>
    <property type="molecule type" value="Genomic_DNA"/>
</dbReference>
<dbReference type="EMBL" id="U00096">
    <property type="protein sequence ID" value="AAC74990.1"/>
    <property type="molecule type" value="Genomic_DNA"/>
</dbReference>
<dbReference type="EMBL" id="AP009048">
    <property type="protein sequence ID" value="BAA15751.1"/>
    <property type="molecule type" value="Genomic_DNA"/>
</dbReference>
<dbReference type="EMBL" id="J01607">
    <property type="protein sequence ID" value="AAA92491.1"/>
    <property type="molecule type" value="Genomic_DNA"/>
</dbReference>
<dbReference type="PIR" id="A37249">
    <property type="entry name" value="FLEC"/>
</dbReference>
<dbReference type="RefSeq" id="NP_416433.1">
    <property type="nucleotide sequence ID" value="NC_000913.3"/>
</dbReference>
<dbReference type="RefSeq" id="WP_000079739.1">
    <property type="nucleotide sequence ID" value="NZ_LN832404.1"/>
</dbReference>
<dbReference type="PDB" id="8CXM">
    <property type="method" value="EM"/>
    <property type="resolution" value="3.21 A"/>
    <property type="chains" value="0/1/2/A/B/C/D/E/F/G/H/I/J/K/L/M/N/O/P/Q/R/S/T/U/V/W/X/Y/Z/a=1-498"/>
</dbReference>
<dbReference type="PDBsum" id="8CXM"/>
<dbReference type="EMDB" id="EMD-27060"/>
<dbReference type="SMR" id="P04949"/>
<dbReference type="BioGRID" id="4259658">
    <property type="interactions" value="23"/>
</dbReference>
<dbReference type="DIP" id="DIP-9649N"/>
<dbReference type="FunCoup" id="P04949">
    <property type="interactions" value="253"/>
</dbReference>
<dbReference type="IntAct" id="P04949">
    <property type="interactions" value="12"/>
</dbReference>
<dbReference type="STRING" id="511145.b1923"/>
<dbReference type="PaxDb" id="511145-b1923"/>
<dbReference type="EnsemblBacteria" id="AAC74990">
    <property type="protein sequence ID" value="AAC74990"/>
    <property type="gene ID" value="b1923"/>
</dbReference>
<dbReference type="GeneID" id="949101"/>
<dbReference type="KEGG" id="ecj:JW1908"/>
<dbReference type="KEGG" id="eco:b1923"/>
<dbReference type="PATRIC" id="fig|1411691.4.peg.326"/>
<dbReference type="EchoBASE" id="EB0317"/>
<dbReference type="eggNOG" id="COG1344">
    <property type="taxonomic scope" value="Bacteria"/>
</dbReference>
<dbReference type="HOGENOM" id="CLU_011142_7_2_6"/>
<dbReference type="InParanoid" id="P04949"/>
<dbReference type="OMA" id="IASQTTY"/>
<dbReference type="OrthoDB" id="9796789at2"/>
<dbReference type="PhylomeDB" id="P04949"/>
<dbReference type="BioCyc" id="EcoCyc:EG10321-MONOMER"/>
<dbReference type="Reactome" id="R-HSA-168176">
    <property type="pathway name" value="Toll Like Receptor 5 (TLR5) Cascade"/>
</dbReference>
<dbReference type="Reactome" id="R-HSA-5602680">
    <property type="pathway name" value="MyD88 deficiency (TLR5)"/>
</dbReference>
<dbReference type="Reactome" id="R-HSA-5603037">
    <property type="pathway name" value="IRAK4 deficiency (TLR5)"/>
</dbReference>
<dbReference type="Reactome" id="R-HSA-975871">
    <property type="pathway name" value="MyD88 cascade initiated on plasma membrane"/>
</dbReference>
<dbReference type="PRO" id="PR:P04949"/>
<dbReference type="Proteomes" id="UP000000625">
    <property type="component" value="Chromosome"/>
</dbReference>
<dbReference type="GO" id="GO:0009288">
    <property type="term" value="C:bacterial-type flagellum"/>
    <property type="evidence" value="ECO:0007669"/>
    <property type="project" value="UniProtKB-SubCell"/>
</dbReference>
<dbReference type="GO" id="GO:0005576">
    <property type="term" value="C:extracellular region"/>
    <property type="evidence" value="ECO:0007669"/>
    <property type="project" value="UniProtKB-SubCell"/>
</dbReference>
<dbReference type="GO" id="GO:0005198">
    <property type="term" value="F:structural molecule activity"/>
    <property type="evidence" value="ECO:0007669"/>
    <property type="project" value="InterPro"/>
</dbReference>
<dbReference type="Gene3D" id="6.10.280.190">
    <property type="match status" value="1"/>
</dbReference>
<dbReference type="Gene3D" id="2.30.220.10">
    <property type="entry name" value="f41 fragment of flagellin, C-terminal domain"/>
    <property type="match status" value="1"/>
</dbReference>
<dbReference type="Gene3D" id="2.170.280.10">
    <property type="entry name" value="f41 fragment of flagellin, middle domain"/>
    <property type="match status" value="1"/>
</dbReference>
<dbReference type="Gene3D" id="1.20.1330.10">
    <property type="entry name" value="f41 fragment of flagellin, N-terminal domain"/>
    <property type="match status" value="1"/>
</dbReference>
<dbReference type="Gene3D" id="6.10.10.10">
    <property type="entry name" value="Flagellar export chaperone, C-terminal domain"/>
    <property type="match status" value="1"/>
</dbReference>
<dbReference type="InterPro" id="IPR001492">
    <property type="entry name" value="Flagellin"/>
</dbReference>
<dbReference type="InterPro" id="IPR046358">
    <property type="entry name" value="Flagellin_C"/>
</dbReference>
<dbReference type="InterPro" id="IPR042187">
    <property type="entry name" value="Flagellin_C_sub2"/>
</dbReference>
<dbReference type="InterPro" id="IPR014981">
    <property type="entry name" value="Flagellin_D3"/>
</dbReference>
<dbReference type="InterPro" id="IPR001029">
    <property type="entry name" value="Flagellin_N"/>
</dbReference>
<dbReference type="InterPro" id="IPR049365">
    <property type="entry name" value="FLIC_barrel"/>
</dbReference>
<dbReference type="PANTHER" id="PTHR42792">
    <property type="entry name" value="FLAGELLIN"/>
    <property type="match status" value="1"/>
</dbReference>
<dbReference type="PANTHER" id="PTHR42792:SF2">
    <property type="entry name" value="FLAGELLIN"/>
    <property type="match status" value="1"/>
</dbReference>
<dbReference type="Pfam" id="PF00700">
    <property type="entry name" value="Flagellin_C"/>
    <property type="match status" value="1"/>
</dbReference>
<dbReference type="Pfam" id="PF08884">
    <property type="entry name" value="Flagellin_D3"/>
    <property type="match status" value="1"/>
</dbReference>
<dbReference type="Pfam" id="PF00669">
    <property type="entry name" value="Flagellin_N"/>
    <property type="match status" value="1"/>
</dbReference>
<dbReference type="Pfam" id="PF21504">
    <property type="entry name" value="FLIC_barrel"/>
    <property type="match status" value="1"/>
</dbReference>
<dbReference type="PRINTS" id="PR00207">
    <property type="entry name" value="FLAGELLIN"/>
</dbReference>
<dbReference type="SUPFAM" id="SSF64518">
    <property type="entry name" value="Phase 1 flagellin"/>
    <property type="match status" value="1"/>
</dbReference>
<comment type="function">
    <text>Flagellin is the subunit protein which polymerizes to form the filaments of bacterial flagella.</text>
</comment>
<comment type="interaction">
    <interactant intactId="EBI-1112859">
        <id>P04949</id>
    </interactant>
    <interactant intactId="EBI-15745451">
        <id>Q29XT7</id>
        <label>etpA</label>
    </interactant>
    <organismsDiffer>true</organismsDiffer>
    <experiments>5</experiments>
</comment>
<comment type="subcellular location">
    <subcellularLocation>
        <location>Secreted</location>
    </subcellularLocation>
    <subcellularLocation>
        <location>Bacterial flagellum</location>
    </subcellularLocation>
</comment>
<comment type="similarity">
    <text evidence="3">Belongs to the bacterial flagellin family.</text>
</comment>
<organism>
    <name type="scientific">Escherichia coli (strain K12)</name>
    <dbReference type="NCBI Taxonomy" id="83333"/>
    <lineage>
        <taxon>Bacteria</taxon>
        <taxon>Pseudomonadati</taxon>
        <taxon>Pseudomonadota</taxon>
        <taxon>Gammaproteobacteria</taxon>
        <taxon>Enterobacterales</taxon>
        <taxon>Enterobacteriaceae</taxon>
        <taxon>Escherichia</taxon>
    </lineage>
</organism>
<accession>P04949</accession>
<evidence type="ECO:0000269" key="1">
    <source>
    </source>
</evidence>
<evidence type="ECO:0000269" key="2">
    <source>
    </source>
</evidence>
<evidence type="ECO:0000305" key="3"/>
<name>FLIC_ECOLI</name>
<protein>
    <recommendedName>
        <fullName>Flagellin</fullName>
    </recommendedName>
</protein>
<gene>
    <name type="primary">fliC</name>
    <name type="synonym">flaF</name>
    <name type="synonym">hag</name>
    <name type="ordered locus">b1923</name>
    <name type="ordered locus">JW1908</name>
</gene>
<reference key="1">
    <citation type="journal article" date="1986" name="J. Bacteriol.">
        <title>Nucleotide sequence of the hag gene encoding flagellin of Escherichia coli.</title>
        <authorList>
            <person name="Kuwajima G."/>
            <person name="Asaka J."/>
            <person name="Fujiwara T."/>
            <person name="Fujiwara T."/>
            <person name="Node K."/>
            <person name="Kondo E."/>
        </authorList>
    </citation>
    <scope>NUCLEOTIDE SEQUENCE [GENOMIC DNA]</scope>
    <source>
        <strain>K12</strain>
    </source>
</reference>
<reference key="2">
    <citation type="journal article" date="1989" name="Mol. Gen. Genet.">
        <title>Isolation and characterization of Escherichia coli hag operator mutants whose hag48 expression has become repressible by a Salmonella H1 repressor.</title>
        <authorList>
            <person name="Hanafusa T."/>
            <person name="Sakai A."/>
            <person name="Tominaga A."/>
            <person name="Enomoto M."/>
        </authorList>
    </citation>
    <scope>NUCLEOTIDE SEQUENCE [GENOMIC DNA]</scope>
    <source>
        <strain>K12</strain>
    </source>
</reference>
<reference key="3">
    <citation type="journal article" date="1996" name="DNA Res.">
        <title>A 460-kb DNA sequence of the Escherichia coli K-12 genome corresponding to the 40.1-50.0 min region on the linkage map.</title>
        <authorList>
            <person name="Itoh T."/>
            <person name="Aiba H."/>
            <person name="Baba T."/>
            <person name="Fujita K."/>
            <person name="Hayashi K."/>
            <person name="Inada T."/>
            <person name="Isono K."/>
            <person name="Kasai H."/>
            <person name="Kimura S."/>
            <person name="Kitakawa M."/>
            <person name="Kitagawa M."/>
            <person name="Makino K."/>
            <person name="Miki T."/>
            <person name="Mizobuchi K."/>
            <person name="Mori H."/>
            <person name="Mori T."/>
            <person name="Motomura K."/>
            <person name="Nakade S."/>
            <person name="Nakamura Y."/>
            <person name="Nashimoto H."/>
            <person name="Nishio Y."/>
            <person name="Oshima T."/>
            <person name="Saito N."/>
            <person name="Sampei G."/>
            <person name="Seki Y."/>
            <person name="Sivasundaram S."/>
            <person name="Tagami H."/>
            <person name="Takeda J."/>
            <person name="Takemoto K."/>
            <person name="Wada C."/>
            <person name="Yamamoto Y."/>
            <person name="Horiuchi T."/>
        </authorList>
    </citation>
    <scope>NUCLEOTIDE SEQUENCE [LARGE SCALE GENOMIC DNA]</scope>
    <source>
        <strain>K12 / W3110 / ATCC 27325 / DSM 5911</strain>
    </source>
</reference>
<reference key="4">
    <citation type="journal article" date="1997" name="Science">
        <title>The complete genome sequence of Escherichia coli K-12.</title>
        <authorList>
            <person name="Blattner F.R."/>
            <person name="Plunkett G. III"/>
            <person name="Bloch C.A."/>
            <person name="Perna N.T."/>
            <person name="Burland V."/>
            <person name="Riley M."/>
            <person name="Collado-Vides J."/>
            <person name="Glasner J.D."/>
            <person name="Rode C.K."/>
            <person name="Mayhew G.F."/>
            <person name="Gregor J."/>
            <person name="Davis N.W."/>
            <person name="Kirkpatrick H.A."/>
            <person name="Goeden M.A."/>
            <person name="Rose D.J."/>
            <person name="Mau B."/>
            <person name="Shao Y."/>
        </authorList>
    </citation>
    <scope>NUCLEOTIDE SEQUENCE [LARGE SCALE GENOMIC DNA]</scope>
    <source>
        <strain>K12 / MG1655 / ATCC 47076</strain>
    </source>
</reference>
<reference key="5">
    <citation type="journal article" date="2006" name="Mol. Syst. Biol.">
        <title>Highly accurate genome sequences of Escherichia coli K-12 strains MG1655 and W3110.</title>
        <authorList>
            <person name="Hayashi K."/>
            <person name="Morooka N."/>
            <person name="Yamamoto Y."/>
            <person name="Fujita K."/>
            <person name="Isono K."/>
            <person name="Choi S."/>
            <person name="Ohtsubo E."/>
            <person name="Baba T."/>
            <person name="Wanner B.L."/>
            <person name="Mori H."/>
            <person name="Horiuchi T."/>
        </authorList>
    </citation>
    <scope>NUCLEOTIDE SEQUENCE [LARGE SCALE GENOMIC DNA]</scope>
    <source>
        <strain>K12 / W3110 / ATCC 27325 / DSM 5911</strain>
    </source>
</reference>
<reference key="6">
    <citation type="journal article" date="1983" name="J. Bacteriol.">
        <title>DNA sequence adjacent to flagellar genes and evolution of flagellar-phase variation.</title>
        <authorList>
            <person name="Szekely E."/>
            <person name="Simon M."/>
        </authorList>
    </citation>
    <scope>NUCLEOTIDE SEQUENCE [GENOMIC DNA] OF 1-20</scope>
</reference>
<reference key="7">
    <citation type="journal article" date="1997" name="Electrophoresis">
        <title>Comparing the predicted and observed properties of proteins encoded in the genome of Escherichia coli K-12.</title>
        <authorList>
            <person name="Link A.J."/>
            <person name="Robison K."/>
            <person name="Church G.M."/>
        </authorList>
    </citation>
    <scope>PROTEIN SEQUENCE OF 2-13</scope>
    <source>
        <strain>K12 / EMG2</strain>
    </source>
</reference>
<reference key="8">
    <citation type="journal article" date="1998" name="J. Mol. Biol.">
        <title>Protein identification with N and C-terminal sequence tags in proteome projects.</title>
        <authorList>
            <person name="Wilkins M.R."/>
            <person name="Gasteiger E."/>
            <person name="Tonella L."/>
            <person name="Ou K."/>
            <person name="Tyler M."/>
            <person name="Sanchez J.-C."/>
            <person name="Gooley A.A."/>
            <person name="Walsh B.J."/>
            <person name="Bairoch A."/>
            <person name="Appel R.D."/>
            <person name="Williams K.L."/>
            <person name="Hochstrasser D.F."/>
        </authorList>
    </citation>
    <scope>PROTEIN SEQUENCE OF 2-5</scope>
    <source>
        <strain>K12 / W3110 / ATCC 27325 / DSM 5911</strain>
    </source>
</reference>
<feature type="initiator methionine" description="Removed" evidence="1 2">
    <location>
        <position position="1"/>
    </location>
</feature>
<feature type="chain" id="PRO_0000182560" description="Flagellin">
    <location>
        <begin position="2"/>
        <end position="498"/>
    </location>
</feature>
<feature type="sequence conflict" description="In Ref. 2; CAA35488." evidence="3" ref="2">
    <original>P</original>
    <variation>L</variation>
    <location>
        <position position="285"/>
    </location>
</feature>
<proteinExistence type="evidence at protein level"/>
<keyword id="KW-0002">3D-structure</keyword>
<keyword id="KW-0975">Bacterial flagellum</keyword>
<keyword id="KW-0903">Direct protein sequencing</keyword>
<keyword id="KW-1185">Reference proteome</keyword>
<keyword id="KW-0964">Secreted</keyword>